<protein>
    <recommendedName>
        <fullName evidence="1">Ribosomal protein uS12 methylthiotransferase RimO</fullName>
        <shortName evidence="1">uS12 MTTase</shortName>
        <shortName evidence="1">uS12 methylthiotransferase</shortName>
        <ecNumber evidence="1">2.8.4.4</ecNumber>
    </recommendedName>
    <alternativeName>
        <fullName evidence="1">Ribosomal protein uS12 (aspartate-C(3))-methylthiotransferase</fullName>
    </alternativeName>
    <alternativeName>
        <fullName evidence="1">Ribosome maturation factor RimO</fullName>
    </alternativeName>
</protein>
<organism>
    <name type="scientific">Bartonella tribocorum (strain CIP 105476 / IBS 506)</name>
    <dbReference type="NCBI Taxonomy" id="382640"/>
    <lineage>
        <taxon>Bacteria</taxon>
        <taxon>Pseudomonadati</taxon>
        <taxon>Pseudomonadota</taxon>
        <taxon>Alphaproteobacteria</taxon>
        <taxon>Hyphomicrobiales</taxon>
        <taxon>Bartonellaceae</taxon>
        <taxon>Bartonella</taxon>
    </lineage>
</organism>
<name>RIMO_BART1</name>
<comment type="function">
    <text evidence="1">Catalyzes the methylthiolation of an aspartic acid residue of ribosomal protein uS12.</text>
</comment>
<comment type="catalytic activity">
    <reaction evidence="1">
        <text>L-aspartate(89)-[ribosomal protein uS12]-hydrogen + (sulfur carrier)-SH + AH2 + 2 S-adenosyl-L-methionine = 3-methylsulfanyl-L-aspartate(89)-[ribosomal protein uS12]-hydrogen + (sulfur carrier)-H + 5'-deoxyadenosine + L-methionine + A + S-adenosyl-L-homocysteine + 2 H(+)</text>
        <dbReference type="Rhea" id="RHEA:37087"/>
        <dbReference type="Rhea" id="RHEA-COMP:10460"/>
        <dbReference type="Rhea" id="RHEA-COMP:10461"/>
        <dbReference type="Rhea" id="RHEA-COMP:14737"/>
        <dbReference type="Rhea" id="RHEA-COMP:14739"/>
        <dbReference type="ChEBI" id="CHEBI:13193"/>
        <dbReference type="ChEBI" id="CHEBI:15378"/>
        <dbReference type="ChEBI" id="CHEBI:17319"/>
        <dbReference type="ChEBI" id="CHEBI:17499"/>
        <dbReference type="ChEBI" id="CHEBI:29917"/>
        <dbReference type="ChEBI" id="CHEBI:29961"/>
        <dbReference type="ChEBI" id="CHEBI:57844"/>
        <dbReference type="ChEBI" id="CHEBI:57856"/>
        <dbReference type="ChEBI" id="CHEBI:59789"/>
        <dbReference type="ChEBI" id="CHEBI:64428"/>
        <dbReference type="ChEBI" id="CHEBI:73599"/>
        <dbReference type="EC" id="2.8.4.4"/>
    </reaction>
</comment>
<comment type="cofactor">
    <cofactor evidence="1">
        <name>[4Fe-4S] cluster</name>
        <dbReference type="ChEBI" id="CHEBI:49883"/>
    </cofactor>
    <text evidence="1">Binds 2 [4Fe-4S] clusters. One cluster is coordinated with 3 cysteines and an exchangeable S-adenosyl-L-methionine.</text>
</comment>
<comment type="subcellular location">
    <subcellularLocation>
        <location evidence="1">Cytoplasm</location>
    </subcellularLocation>
</comment>
<comment type="similarity">
    <text evidence="1">Belongs to the methylthiotransferase family. RimO subfamily.</text>
</comment>
<keyword id="KW-0004">4Fe-4S</keyword>
<keyword id="KW-0963">Cytoplasm</keyword>
<keyword id="KW-0408">Iron</keyword>
<keyword id="KW-0411">Iron-sulfur</keyword>
<keyword id="KW-0479">Metal-binding</keyword>
<keyword id="KW-0949">S-adenosyl-L-methionine</keyword>
<keyword id="KW-0808">Transferase</keyword>
<evidence type="ECO:0000255" key="1">
    <source>
        <dbReference type="HAMAP-Rule" id="MF_01865"/>
    </source>
</evidence>
<evidence type="ECO:0000255" key="2">
    <source>
        <dbReference type="PROSITE-ProRule" id="PRU01266"/>
    </source>
</evidence>
<reference key="1">
    <citation type="journal article" date="2007" name="Nat. Genet.">
        <title>Genomic analysis of Bartonella identifies type IV secretion systems as host adaptability factors.</title>
        <authorList>
            <person name="Saenz H.L."/>
            <person name="Engel P."/>
            <person name="Stoeckli M.C."/>
            <person name="Lanz C."/>
            <person name="Raddatz G."/>
            <person name="Vayssier-Taussat M."/>
            <person name="Birtles R."/>
            <person name="Schuster S.C."/>
            <person name="Dehio C."/>
        </authorList>
    </citation>
    <scope>NUCLEOTIDE SEQUENCE [LARGE SCALE GENOMIC DNA]</scope>
    <source>
        <strain>CIP 105476 / IBS 506</strain>
    </source>
</reference>
<sequence length="437" mass="49446">MVAPRISFVSLGCPKALVDSERIITSLRSEGYEISRQHQGADVVIVNTCGFLDSARKESLANIDEALKENGKVIVTGCLGADPDVIRQTYPNVLAITGPQAYESVIEAVHTAIPPIHDPFLDLVPPQGIRLTPRHYAYLKISEGCSNRCSFCIIPTLRGDLTSRPISDVLREAEKLVQAGVKELLVISQDTSAYGIDLKYLENSWKDRTIKTKFFDLCRELGDMGIWVRMHYVYPYPHVDEVIELMAAKKILPYLDIPFQHASPTVLRHMKRPALMEKTNRRIEKWRKICPDLTLRSTFIVGFPGETNEDFNMLLEWLEDAKIERAGCFKYEEVKGAVANDLGLENIPEDVKENRWHRFMAKQQQISTHLLKKKIGKRLQVLIDESQGKVAKGRSQYDAPEIDGVVHISSRRPLRVGEFVTVKIEQSDAYDLYGIAV</sequence>
<dbReference type="EC" id="2.8.4.4" evidence="1"/>
<dbReference type="EMBL" id="AM260525">
    <property type="protein sequence ID" value="CAK01532.1"/>
    <property type="molecule type" value="Genomic_DNA"/>
</dbReference>
<dbReference type="RefSeq" id="WP_012231735.1">
    <property type="nucleotide sequence ID" value="NC_010161.1"/>
</dbReference>
<dbReference type="SMR" id="A9IUA4"/>
<dbReference type="KEGG" id="btr:BT_1161"/>
<dbReference type="eggNOG" id="COG0621">
    <property type="taxonomic scope" value="Bacteria"/>
</dbReference>
<dbReference type="HOGENOM" id="CLU_018697_0_0_5"/>
<dbReference type="Proteomes" id="UP000001592">
    <property type="component" value="Chromosome"/>
</dbReference>
<dbReference type="GO" id="GO:0005829">
    <property type="term" value="C:cytosol"/>
    <property type="evidence" value="ECO:0007669"/>
    <property type="project" value="TreeGrafter"/>
</dbReference>
<dbReference type="GO" id="GO:0051539">
    <property type="term" value="F:4 iron, 4 sulfur cluster binding"/>
    <property type="evidence" value="ECO:0007669"/>
    <property type="project" value="UniProtKB-UniRule"/>
</dbReference>
<dbReference type="GO" id="GO:0035599">
    <property type="term" value="F:aspartic acid methylthiotransferase activity"/>
    <property type="evidence" value="ECO:0007669"/>
    <property type="project" value="TreeGrafter"/>
</dbReference>
<dbReference type="GO" id="GO:0046872">
    <property type="term" value="F:metal ion binding"/>
    <property type="evidence" value="ECO:0007669"/>
    <property type="project" value="UniProtKB-KW"/>
</dbReference>
<dbReference type="GO" id="GO:0103039">
    <property type="term" value="F:protein methylthiotransferase activity"/>
    <property type="evidence" value="ECO:0007669"/>
    <property type="project" value="UniProtKB-EC"/>
</dbReference>
<dbReference type="GO" id="GO:0006400">
    <property type="term" value="P:tRNA modification"/>
    <property type="evidence" value="ECO:0007669"/>
    <property type="project" value="InterPro"/>
</dbReference>
<dbReference type="CDD" id="cd01335">
    <property type="entry name" value="Radical_SAM"/>
    <property type="match status" value="1"/>
</dbReference>
<dbReference type="FunFam" id="2.40.50.140:FF:000210">
    <property type="entry name" value="Ribosomal protein S12 methylthiotransferase RimO"/>
    <property type="match status" value="1"/>
</dbReference>
<dbReference type="FunFam" id="3.40.50.12160:FF:000002">
    <property type="entry name" value="Ribosomal protein S12 methylthiotransferase RimO"/>
    <property type="match status" value="1"/>
</dbReference>
<dbReference type="FunFam" id="3.80.30.20:FF:000001">
    <property type="entry name" value="tRNA-2-methylthio-N(6)-dimethylallyladenosine synthase 2"/>
    <property type="match status" value="1"/>
</dbReference>
<dbReference type="Gene3D" id="3.40.50.12160">
    <property type="entry name" value="Methylthiotransferase, N-terminal domain"/>
    <property type="match status" value="1"/>
</dbReference>
<dbReference type="Gene3D" id="2.40.50.140">
    <property type="entry name" value="Nucleic acid-binding proteins"/>
    <property type="match status" value="1"/>
</dbReference>
<dbReference type="Gene3D" id="3.80.30.20">
    <property type="entry name" value="tm_1862 like domain"/>
    <property type="match status" value="1"/>
</dbReference>
<dbReference type="HAMAP" id="MF_01865">
    <property type="entry name" value="MTTase_RimO"/>
    <property type="match status" value="1"/>
</dbReference>
<dbReference type="InterPro" id="IPR006638">
    <property type="entry name" value="Elp3/MiaA/NifB-like_rSAM"/>
</dbReference>
<dbReference type="InterPro" id="IPR005839">
    <property type="entry name" value="Methylthiotransferase"/>
</dbReference>
<dbReference type="InterPro" id="IPR020612">
    <property type="entry name" value="Methylthiotransferase_CS"/>
</dbReference>
<dbReference type="InterPro" id="IPR013848">
    <property type="entry name" value="Methylthiotransferase_N"/>
</dbReference>
<dbReference type="InterPro" id="IPR038135">
    <property type="entry name" value="Methylthiotransferase_N_sf"/>
</dbReference>
<dbReference type="InterPro" id="IPR012340">
    <property type="entry name" value="NA-bd_OB-fold"/>
</dbReference>
<dbReference type="InterPro" id="IPR005840">
    <property type="entry name" value="Ribosomal_uS12_MeSTrfase_RimO"/>
</dbReference>
<dbReference type="InterPro" id="IPR007197">
    <property type="entry name" value="rSAM"/>
</dbReference>
<dbReference type="InterPro" id="IPR023404">
    <property type="entry name" value="rSAM_horseshoe"/>
</dbReference>
<dbReference type="InterPro" id="IPR002792">
    <property type="entry name" value="TRAM_dom"/>
</dbReference>
<dbReference type="NCBIfam" id="TIGR01125">
    <property type="entry name" value="30S ribosomal protein S12 methylthiotransferase RimO"/>
    <property type="match status" value="1"/>
</dbReference>
<dbReference type="NCBIfam" id="TIGR00089">
    <property type="entry name" value="MiaB/RimO family radical SAM methylthiotransferase"/>
    <property type="match status" value="1"/>
</dbReference>
<dbReference type="PANTHER" id="PTHR43837">
    <property type="entry name" value="RIBOSOMAL PROTEIN S12 METHYLTHIOTRANSFERASE RIMO"/>
    <property type="match status" value="1"/>
</dbReference>
<dbReference type="PANTHER" id="PTHR43837:SF1">
    <property type="entry name" value="RIBOSOMAL PROTEIN US12 METHYLTHIOTRANSFERASE RIMO"/>
    <property type="match status" value="1"/>
</dbReference>
<dbReference type="Pfam" id="PF04055">
    <property type="entry name" value="Radical_SAM"/>
    <property type="match status" value="1"/>
</dbReference>
<dbReference type="Pfam" id="PF18693">
    <property type="entry name" value="TRAM_2"/>
    <property type="match status" value="1"/>
</dbReference>
<dbReference type="Pfam" id="PF00919">
    <property type="entry name" value="UPF0004"/>
    <property type="match status" value="1"/>
</dbReference>
<dbReference type="SFLD" id="SFLDG01082">
    <property type="entry name" value="B12-binding_domain_containing"/>
    <property type="match status" value="1"/>
</dbReference>
<dbReference type="SFLD" id="SFLDG01061">
    <property type="entry name" value="methylthiotransferase"/>
    <property type="match status" value="1"/>
</dbReference>
<dbReference type="SFLD" id="SFLDF00274">
    <property type="entry name" value="ribosomal_protein_S12_methylth"/>
    <property type="match status" value="1"/>
</dbReference>
<dbReference type="SMART" id="SM00729">
    <property type="entry name" value="Elp3"/>
    <property type="match status" value="1"/>
</dbReference>
<dbReference type="SUPFAM" id="SSF102114">
    <property type="entry name" value="Radical SAM enzymes"/>
    <property type="match status" value="1"/>
</dbReference>
<dbReference type="PROSITE" id="PS51449">
    <property type="entry name" value="MTTASE_N"/>
    <property type="match status" value="1"/>
</dbReference>
<dbReference type="PROSITE" id="PS01278">
    <property type="entry name" value="MTTASE_RADICAL"/>
    <property type="match status" value="1"/>
</dbReference>
<dbReference type="PROSITE" id="PS51918">
    <property type="entry name" value="RADICAL_SAM"/>
    <property type="match status" value="1"/>
</dbReference>
<dbReference type="PROSITE" id="PS50926">
    <property type="entry name" value="TRAM"/>
    <property type="match status" value="1"/>
</dbReference>
<proteinExistence type="inferred from homology"/>
<feature type="chain" id="PRO_0000374710" description="Ribosomal protein uS12 methylthiotransferase RimO">
    <location>
        <begin position="1"/>
        <end position="437"/>
    </location>
</feature>
<feature type="domain" description="MTTase N-terminal" evidence="1">
    <location>
        <begin position="4"/>
        <end position="114"/>
    </location>
</feature>
<feature type="domain" description="Radical SAM core" evidence="2">
    <location>
        <begin position="131"/>
        <end position="369"/>
    </location>
</feature>
<feature type="domain" description="TRAM" evidence="1">
    <location>
        <begin position="372"/>
        <end position="437"/>
    </location>
</feature>
<feature type="binding site" evidence="1">
    <location>
        <position position="13"/>
    </location>
    <ligand>
        <name>[4Fe-4S] cluster</name>
        <dbReference type="ChEBI" id="CHEBI:49883"/>
        <label>1</label>
    </ligand>
</feature>
<feature type="binding site" evidence="1">
    <location>
        <position position="49"/>
    </location>
    <ligand>
        <name>[4Fe-4S] cluster</name>
        <dbReference type="ChEBI" id="CHEBI:49883"/>
        <label>1</label>
    </ligand>
</feature>
<feature type="binding site" evidence="1">
    <location>
        <position position="78"/>
    </location>
    <ligand>
        <name>[4Fe-4S] cluster</name>
        <dbReference type="ChEBI" id="CHEBI:49883"/>
        <label>1</label>
    </ligand>
</feature>
<feature type="binding site" evidence="1">
    <location>
        <position position="145"/>
    </location>
    <ligand>
        <name>[4Fe-4S] cluster</name>
        <dbReference type="ChEBI" id="CHEBI:49883"/>
        <label>2</label>
        <note>4Fe-4S-S-AdoMet</note>
    </ligand>
</feature>
<feature type="binding site" evidence="1">
    <location>
        <position position="149"/>
    </location>
    <ligand>
        <name>[4Fe-4S] cluster</name>
        <dbReference type="ChEBI" id="CHEBI:49883"/>
        <label>2</label>
        <note>4Fe-4S-S-AdoMet</note>
    </ligand>
</feature>
<feature type="binding site" evidence="1">
    <location>
        <position position="152"/>
    </location>
    <ligand>
        <name>[4Fe-4S] cluster</name>
        <dbReference type="ChEBI" id="CHEBI:49883"/>
        <label>2</label>
        <note>4Fe-4S-S-AdoMet</note>
    </ligand>
</feature>
<accession>A9IUA4</accession>
<gene>
    <name evidence="1" type="primary">rimO</name>
    <name type="ordered locus">BT_1161</name>
</gene>